<accession>Q3K3G9</accession>
<keyword id="KW-0963">Cytoplasm</keyword>
<keyword id="KW-0460">Magnesium</keyword>
<keyword id="KW-0479">Metal-binding</keyword>
<keyword id="KW-0548">Nucleotidyltransferase</keyword>
<keyword id="KW-0694">RNA-binding</keyword>
<keyword id="KW-0808">Transferase</keyword>
<name>PNP_STRA1</name>
<dbReference type="EC" id="2.7.7.8" evidence="1"/>
<dbReference type="EMBL" id="CP000114">
    <property type="protein sequence ID" value="ABA45814.1"/>
    <property type="molecule type" value="Genomic_DNA"/>
</dbReference>
<dbReference type="RefSeq" id="WP_000043850.1">
    <property type="nucleotide sequence ID" value="NC_007432.1"/>
</dbReference>
<dbReference type="SMR" id="Q3K3G9"/>
<dbReference type="KEGG" id="sak:SAK_0266"/>
<dbReference type="HOGENOM" id="CLU_004217_2_2_9"/>
<dbReference type="GO" id="GO:0005829">
    <property type="term" value="C:cytosol"/>
    <property type="evidence" value="ECO:0007669"/>
    <property type="project" value="TreeGrafter"/>
</dbReference>
<dbReference type="GO" id="GO:0000175">
    <property type="term" value="F:3'-5'-RNA exonuclease activity"/>
    <property type="evidence" value="ECO:0007669"/>
    <property type="project" value="TreeGrafter"/>
</dbReference>
<dbReference type="GO" id="GO:0000287">
    <property type="term" value="F:magnesium ion binding"/>
    <property type="evidence" value="ECO:0007669"/>
    <property type="project" value="UniProtKB-UniRule"/>
</dbReference>
<dbReference type="GO" id="GO:0004654">
    <property type="term" value="F:polyribonucleotide nucleotidyltransferase activity"/>
    <property type="evidence" value="ECO:0007669"/>
    <property type="project" value="UniProtKB-UniRule"/>
</dbReference>
<dbReference type="GO" id="GO:0003723">
    <property type="term" value="F:RNA binding"/>
    <property type="evidence" value="ECO:0007669"/>
    <property type="project" value="UniProtKB-UniRule"/>
</dbReference>
<dbReference type="GO" id="GO:0006402">
    <property type="term" value="P:mRNA catabolic process"/>
    <property type="evidence" value="ECO:0007669"/>
    <property type="project" value="UniProtKB-UniRule"/>
</dbReference>
<dbReference type="GO" id="GO:0006396">
    <property type="term" value="P:RNA processing"/>
    <property type="evidence" value="ECO:0007669"/>
    <property type="project" value="InterPro"/>
</dbReference>
<dbReference type="CDD" id="cd02393">
    <property type="entry name" value="KH-I_PNPase"/>
    <property type="match status" value="1"/>
</dbReference>
<dbReference type="CDD" id="cd11363">
    <property type="entry name" value="RNase_PH_PNPase_1"/>
    <property type="match status" value="1"/>
</dbReference>
<dbReference type="CDD" id="cd11364">
    <property type="entry name" value="RNase_PH_PNPase_2"/>
    <property type="match status" value="1"/>
</dbReference>
<dbReference type="FunFam" id="2.40.50.140:FF:000023">
    <property type="entry name" value="Polyribonucleotide nucleotidyltransferase"/>
    <property type="match status" value="1"/>
</dbReference>
<dbReference type="FunFam" id="3.30.1370.10:FF:000001">
    <property type="entry name" value="Polyribonucleotide nucleotidyltransferase"/>
    <property type="match status" value="1"/>
</dbReference>
<dbReference type="FunFam" id="3.30.230.70:FF:000001">
    <property type="entry name" value="Polyribonucleotide nucleotidyltransferase"/>
    <property type="match status" value="1"/>
</dbReference>
<dbReference type="FunFam" id="3.30.230.70:FF:000002">
    <property type="entry name" value="Polyribonucleotide nucleotidyltransferase"/>
    <property type="match status" value="1"/>
</dbReference>
<dbReference type="Gene3D" id="3.30.230.70">
    <property type="entry name" value="GHMP Kinase, N-terminal domain"/>
    <property type="match status" value="2"/>
</dbReference>
<dbReference type="Gene3D" id="3.30.1370.10">
    <property type="entry name" value="K Homology domain, type 1"/>
    <property type="match status" value="1"/>
</dbReference>
<dbReference type="Gene3D" id="2.40.50.140">
    <property type="entry name" value="Nucleic acid-binding proteins"/>
    <property type="match status" value="1"/>
</dbReference>
<dbReference type="HAMAP" id="MF_01595">
    <property type="entry name" value="PNPase"/>
    <property type="match status" value="1"/>
</dbReference>
<dbReference type="InterPro" id="IPR001247">
    <property type="entry name" value="ExoRNase_PH_dom1"/>
</dbReference>
<dbReference type="InterPro" id="IPR015847">
    <property type="entry name" value="ExoRNase_PH_dom2"/>
</dbReference>
<dbReference type="InterPro" id="IPR036345">
    <property type="entry name" value="ExoRNase_PH_dom2_sf"/>
</dbReference>
<dbReference type="InterPro" id="IPR004087">
    <property type="entry name" value="KH_dom"/>
</dbReference>
<dbReference type="InterPro" id="IPR004088">
    <property type="entry name" value="KH_dom_type_1"/>
</dbReference>
<dbReference type="InterPro" id="IPR036612">
    <property type="entry name" value="KH_dom_type_1_sf"/>
</dbReference>
<dbReference type="InterPro" id="IPR012340">
    <property type="entry name" value="NA-bd_OB-fold"/>
</dbReference>
<dbReference type="InterPro" id="IPR012162">
    <property type="entry name" value="PNPase"/>
</dbReference>
<dbReference type="InterPro" id="IPR027408">
    <property type="entry name" value="PNPase/RNase_PH_dom_sf"/>
</dbReference>
<dbReference type="InterPro" id="IPR015848">
    <property type="entry name" value="PNPase_PH_RNA-bd_bac/org-type"/>
</dbReference>
<dbReference type="InterPro" id="IPR036456">
    <property type="entry name" value="PNPase_PH_RNA-bd_sf"/>
</dbReference>
<dbReference type="InterPro" id="IPR020568">
    <property type="entry name" value="Ribosomal_Su5_D2-typ_SF"/>
</dbReference>
<dbReference type="InterPro" id="IPR003029">
    <property type="entry name" value="S1_domain"/>
</dbReference>
<dbReference type="NCBIfam" id="TIGR03591">
    <property type="entry name" value="polynuc_phos"/>
    <property type="match status" value="1"/>
</dbReference>
<dbReference type="NCBIfam" id="NF008805">
    <property type="entry name" value="PRK11824.1"/>
    <property type="match status" value="1"/>
</dbReference>
<dbReference type="PANTHER" id="PTHR11252">
    <property type="entry name" value="POLYRIBONUCLEOTIDE NUCLEOTIDYLTRANSFERASE"/>
    <property type="match status" value="1"/>
</dbReference>
<dbReference type="PANTHER" id="PTHR11252:SF0">
    <property type="entry name" value="POLYRIBONUCLEOTIDE NUCLEOTIDYLTRANSFERASE 1, MITOCHONDRIAL"/>
    <property type="match status" value="1"/>
</dbReference>
<dbReference type="Pfam" id="PF00013">
    <property type="entry name" value="KH_1"/>
    <property type="match status" value="1"/>
</dbReference>
<dbReference type="Pfam" id="PF03726">
    <property type="entry name" value="PNPase"/>
    <property type="match status" value="1"/>
</dbReference>
<dbReference type="Pfam" id="PF01138">
    <property type="entry name" value="RNase_PH"/>
    <property type="match status" value="2"/>
</dbReference>
<dbReference type="Pfam" id="PF03725">
    <property type="entry name" value="RNase_PH_C"/>
    <property type="match status" value="2"/>
</dbReference>
<dbReference type="Pfam" id="PF00575">
    <property type="entry name" value="S1"/>
    <property type="match status" value="1"/>
</dbReference>
<dbReference type="PIRSF" id="PIRSF005499">
    <property type="entry name" value="PNPase"/>
    <property type="match status" value="1"/>
</dbReference>
<dbReference type="SMART" id="SM00322">
    <property type="entry name" value="KH"/>
    <property type="match status" value="1"/>
</dbReference>
<dbReference type="SMART" id="SM00316">
    <property type="entry name" value="S1"/>
    <property type="match status" value="1"/>
</dbReference>
<dbReference type="SUPFAM" id="SSF54791">
    <property type="entry name" value="Eukaryotic type KH-domain (KH-domain type I)"/>
    <property type="match status" value="1"/>
</dbReference>
<dbReference type="SUPFAM" id="SSF50249">
    <property type="entry name" value="Nucleic acid-binding proteins"/>
    <property type="match status" value="1"/>
</dbReference>
<dbReference type="SUPFAM" id="SSF46915">
    <property type="entry name" value="Polynucleotide phosphorylase/guanosine pentaphosphate synthase (PNPase/GPSI), domain 3"/>
    <property type="match status" value="1"/>
</dbReference>
<dbReference type="SUPFAM" id="SSF55666">
    <property type="entry name" value="Ribonuclease PH domain 2-like"/>
    <property type="match status" value="2"/>
</dbReference>
<dbReference type="SUPFAM" id="SSF54211">
    <property type="entry name" value="Ribosomal protein S5 domain 2-like"/>
    <property type="match status" value="2"/>
</dbReference>
<dbReference type="PROSITE" id="PS50084">
    <property type="entry name" value="KH_TYPE_1"/>
    <property type="match status" value="1"/>
</dbReference>
<dbReference type="PROSITE" id="PS50126">
    <property type="entry name" value="S1"/>
    <property type="match status" value="1"/>
</dbReference>
<sequence>MSKQVFEMIFAGKKLVVETGQVAKQANGSVVVRYGDSTVLTAAVMSKKMSTGDFFPLQVNYEEKMYAAGKFPGGFNKREGRPSTDATLTARLIDRPIRPMFAEGFRNEVQVINTVLSFDENASAPMAAMFGSSLALSISDIPFNGPIAGVQVAYVDGNFIINPTAQEQEASALELTVAGTKEAINMVESGAKELSEEIMLEALLKGHEAVCELIAFQEEIVTAIGKEKAEVELLQVDPELQAEIIATHNIALQAAVQVEEKKAREAATEAVKEVVIGEYEARYAEHEEYDRIMRDVAEILEQMEHAEVRRLITEDKIRPDGRRVDEIRPLDAEIDFLPQVHGSGLFTRGQTQALSVLTLAPMGEAQIIDGLTPEYKKRFMHHYNFPQYSVGETGRYGAAGRREIGHGALGERALEQVLPSLEEFPYAIRLVAEVLESNGSSSQASICAGTLALMAGGVPIKAPVAGIAMGLISDGTNYTVLTDIQGLEDHFGDMDFKVAGTREGITALQMDIKIEGITPQILEEALAQAKKARFEILDVLHGAIAEPRPQLAPTAPKIDMIKIDVDKIKVVIGKGGETIDKIIAETGVKIDIDEEGNVSIFSSDQAAIDRTKDIIASLVREAKVGEVYHAKVVRIEKFGAFVNLFDKTDALVHISEIAWTRTANVADVLEIGEEVDVKVIKIDDKGRVDASMKALLPRPPKADNPKKES</sequence>
<comment type="function">
    <text evidence="1">Involved in mRNA degradation. Catalyzes the phosphorolysis of single-stranded polyribonucleotides processively in the 3'- to 5'-direction.</text>
</comment>
<comment type="catalytic activity">
    <reaction evidence="1">
        <text>RNA(n+1) + phosphate = RNA(n) + a ribonucleoside 5'-diphosphate</text>
        <dbReference type="Rhea" id="RHEA:22096"/>
        <dbReference type="Rhea" id="RHEA-COMP:14527"/>
        <dbReference type="Rhea" id="RHEA-COMP:17342"/>
        <dbReference type="ChEBI" id="CHEBI:43474"/>
        <dbReference type="ChEBI" id="CHEBI:57930"/>
        <dbReference type="ChEBI" id="CHEBI:140395"/>
        <dbReference type="EC" id="2.7.7.8"/>
    </reaction>
</comment>
<comment type="cofactor">
    <cofactor evidence="1">
        <name>Mg(2+)</name>
        <dbReference type="ChEBI" id="CHEBI:18420"/>
    </cofactor>
</comment>
<comment type="subcellular location">
    <subcellularLocation>
        <location evidence="1">Cytoplasm</location>
    </subcellularLocation>
</comment>
<comment type="similarity">
    <text evidence="1">Belongs to the polyribonucleotide nucleotidyltransferase family.</text>
</comment>
<gene>
    <name evidence="1" type="primary">pnp</name>
    <name type="ordered locus">SAK_0266</name>
</gene>
<protein>
    <recommendedName>
        <fullName evidence="1">Polyribonucleotide nucleotidyltransferase</fullName>
        <ecNumber evidence="1">2.7.7.8</ecNumber>
    </recommendedName>
    <alternativeName>
        <fullName evidence="1">Polynucleotide phosphorylase</fullName>
        <shortName evidence="1">PNPase</shortName>
    </alternativeName>
</protein>
<feature type="chain" id="PRO_0000329864" description="Polyribonucleotide nucleotidyltransferase">
    <location>
        <begin position="1"/>
        <end position="709"/>
    </location>
</feature>
<feature type="domain" description="KH" evidence="1">
    <location>
        <begin position="556"/>
        <end position="615"/>
    </location>
</feature>
<feature type="domain" description="S1 motif" evidence="1">
    <location>
        <begin position="625"/>
        <end position="693"/>
    </location>
</feature>
<feature type="binding site" evidence="1">
    <location>
        <position position="489"/>
    </location>
    <ligand>
        <name>Mg(2+)</name>
        <dbReference type="ChEBI" id="CHEBI:18420"/>
    </ligand>
</feature>
<feature type="binding site" evidence="1">
    <location>
        <position position="495"/>
    </location>
    <ligand>
        <name>Mg(2+)</name>
        <dbReference type="ChEBI" id="CHEBI:18420"/>
    </ligand>
</feature>
<proteinExistence type="inferred from homology"/>
<organism>
    <name type="scientific">Streptococcus agalactiae serotype Ia (strain ATCC 27591 / A909 / CDC SS700)</name>
    <dbReference type="NCBI Taxonomy" id="205921"/>
    <lineage>
        <taxon>Bacteria</taxon>
        <taxon>Bacillati</taxon>
        <taxon>Bacillota</taxon>
        <taxon>Bacilli</taxon>
        <taxon>Lactobacillales</taxon>
        <taxon>Streptococcaceae</taxon>
        <taxon>Streptococcus</taxon>
    </lineage>
</organism>
<evidence type="ECO:0000255" key="1">
    <source>
        <dbReference type="HAMAP-Rule" id="MF_01595"/>
    </source>
</evidence>
<reference key="1">
    <citation type="journal article" date="2005" name="Proc. Natl. Acad. Sci. U.S.A.">
        <title>Genome analysis of multiple pathogenic isolates of Streptococcus agalactiae: implications for the microbial 'pan-genome'.</title>
        <authorList>
            <person name="Tettelin H."/>
            <person name="Masignani V."/>
            <person name="Cieslewicz M.J."/>
            <person name="Donati C."/>
            <person name="Medini D."/>
            <person name="Ward N.L."/>
            <person name="Angiuoli S.V."/>
            <person name="Crabtree J."/>
            <person name="Jones A.L."/>
            <person name="Durkin A.S."/>
            <person name="DeBoy R.T."/>
            <person name="Davidsen T.M."/>
            <person name="Mora M."/>
            <person name="Scarselli M."/>
            <person name="Margarit y Ros I."/>
            <person name="Peterson J.D."/>
            <person name="Hauser C.R."/>
            <person name="Sundaram J.P."/>
            <person name="Nelson W.C."/>
            <person name="Madupu R."/>
            <person name="Brinkac L.M."/>
            <person name="Dodson R.J."/>
            <person name="Rosovitz M.J."/>
            <person name="Sullivan S.A."/>
            <person name="Daugherty S.C."/>
            <person name="Haft D.H."/>
            <person name="Selengut J."/>
            <person name="Gwinn M.L."/>
            <person name="Zhou L."/>
            <person name="Zafar N."/>
            <person name="Khouri H."/>
            <person name="Radune D."/>
            <person name="Dimitrov G."/>
            <person name="Watkins K."/>
            <person name="O'Connor K.J."/>
            <person name="Smith S."/>
            <person name="Utterback T.R."/>
            <person name="White O."/>
            <person name="Rubens C.E."/>
            <person name="Grandi G."/>
            <person name="Madoff L.C."/>
            <person name="Kasper D.L."/>
            <person name="Telford J.L."/>
            <person name="Wessels M.R."/>
            <person name="Rappuoli R."/>
            <person name="Fraser C.M."/>
        </authorList>
    </citation>
    <scope>NUCLEOTIDE SEQUENCE [LARGE SCALE GENOMIC DNA]</scope>
    <source>
        <strain>ATCC 27591 / A909 / CDC SS700</strain>
    </source>
</reference>